<comment type="function">
    <text evidence="2">Component of the ubiquinol-cytochrome c reductase complex (complex III or cytochrome b-c1 complex) that is part of the mitochondrial respiratory chain. The b-c1 complex mediates electron transfer from ubiquinol to cytochrome c. Contributes to the generation of a proton gradient across the mitochondrial membrane that is then used for ATP synthesis.</text>
</comment>
<comment type="cofactor">
    <cofactor evidence="2">
        <name>heme b</name>
        <dbReference type="ChEBI" id="CHEBI:60344"/>
    </cofactor>
    <text evidence="2">Binds 2 heme b groups non-covalently.</text>
</comment>
<comment type="subunit">
    <text evidence="2">The cytochrome bc1 complex contains 3 respiratory subunits (MT-CYB, CYC1 and UQCRFS1), 2 core proteins (UQCRC1 and UQCRC2) and probably 6 low-molecular weight proteins.</text>
</comment>
<comment type="subcellular location">
    <subcellularLocation>
        <location evidence="2">Mitochondrion inner membrane</location>
        <topology evidence="2">Multi-pass membrane protein</topology>
    </subcellularLocation>
</comment>
<comment type="miscellaneous">
    <text evidence="1">Heme 1 (or BL or b562) is low-potential and absorbs at about 562 nm, and heme 2 (or BH or b566) is high-potential and absorbs at about 566 nm.</text>
</comment>
<comment type="similarity">
    <text evidence="3 4">Belongs to the cytochrome b family.</text>
</comment>
<comment type="caution">
    <text evidence="2">The full-length protein contains only eight transmembrane helices, not nine as predicted by bioinformatics tools.</text>
</comment>
<evidence type="ECO:0000250" key="1"/>
<evidence type="ECO:0000250" key="2">
    <source>
        <dbReference type="UniProtKB" id="P00157"/>
    </source>
</evidence>
<evidence type="ECO:0000255" key="3">
    <source>
        <dbReference type="PROSITE-ProRule" id="PRU00967"/>
    </source>
</evidence>
<evidence type="ECO:0000255" key="4">
    <source>
        <dbReference type="PROSITE-ProRule" id="PRU00968"/>
    </source>
</evidence>
<dbReference type="EMBL" id="AF220408">
    <property type="protein sequence ID" value="AAF35311.1"/>
    <property type="molecule type" value="Genomic_DNA"/>
</dbReference>
<dbReference type="SMR" id="Q9MLD7"/>
<dbReference type="GO" id="GO:0005743">
    <property type="term" value="C:mitochondrial inner membrane"/>
    <property type="evidence" value="ECO:0007669"/>
    <property type="project" value="UniProtKB-SubCell"/>
</dbReference>
<dbReference type="GO" id="GO:0045275">
    <property type="term" value="C:respiratory chain complex III"/>
    <property type="evidence" value="ECO:0007669"/>
    <property type="project" value="InterPro"/>
</dbReference>
<dbReference type="GO" id="GO:0046872">
    <property type="term" value="F:metal ion binding"/>
    <property type="evidence" value="ECO:0007669"/>
    <property type="project" value="UniProtKB-KW"/>
</dbReference>
<dbReference type="GO" id="GO:0008121">
    <property type="term" value="F:ubiquinol-cytochrome-c reductase activity"/>
    <property type="evidence" value="ECO:0007669"/>
    <property type="project" value="InterPro"/>
</dbReference>
<dbReference type="GO" id="GO:0006122">
    <property type="term" value="P:mitochondrial electron transport, ubiquinol to cytochrome c"/>
    <property type="evidence" value="ECO:0007669"/>
    <property type="project" value="TreeGrafter"/>
</dbReference>
<dbReference type="CDD" id="cd00290">
    <property type="entry name" value="cytochrome_b_C"/>
    <property type="match status" value="1"/>
</dbReference>
<dbReference type="CDD" id="cd00284">
    <property type="entry name" value="Cytochrome_b_N"/>
    <property type="match status" value="1"/>
</dbReference>
<dbReference type="Gene3D" id="1.20.810.10">
    <property type="entry name" value="Cytochrome Bc1 Complex, Chain C"/>
    <property type="match status" value="1"/>
</dbReference>
<dbReference type="InterPro" id="IPR005798">
    <property type="entry name" value="Cyt_b/b6_C"/>
</dbReference>
<dbReference type="InterPro" id="IPR036150">
    <property type="entry name" value="Cyt_b/b6_C_sf"/>
</dbReference>
<dbReference type="InterPro" id="IPR005797">
    <property type="entry name" value="Cyt_b/b6_N"/>
</dbReference>
<dbReference type="InterPro" id="IPR027387">
    <property type="entry name" value="Cytb/b6-like_sf"/>
</dbReference>
<dbReference type="InterPro" id="IPR030689">
    <property type="entry name" value="Cytochrome_b"/>
</dbReference>
<dbReference type="InterPro" id="IPR048260">
    <property type="entry name" value="Cytochrome_b_C_euk/bac"/>
</dbReference>
<dbReference type="InterPro" id="IPR048259">
    <property type="entry name" value="Cytochrome_b_N_euk/bac"/>
</dbReference>
<dbReference type="InterPro" id="IPR016174">
    <property type="entry name" value="Di-haem_cyt_TM"/>
</dbReference>
<dbReference type="PANTHER" id="PTHR19271">
    <property type="entry name" value="CYTOCHROME B"/>
    <property type="match status" value="1"/>
</dbReference>
<dbReference type="PANTHER" id="PTHR19271:SF16">
    <property type="entry name" value="CYTOCHROME B"/>
    <property type="match status" value="1"/>
</dbReference>
<dbReference type="Pfam" id="PF00032">
    <property type="entry name" value="Cytochrom_B_C"/>
    <property type="match status" value="1"/>
</dbReference>
<dbReference type="Pfam" id="PF00033">
    <property type="entry name" value="Cytochrome_B"/>
    <property type="match status" value="1"/>
</dbReference>
<dbReference type="PIRSF" id="PIRSF038885">
    <property type="entry name" value="COB"/>
    <property type="match status" value="1"/>
</dbReference>
<dbReference type="SUPFAM" id="SSF81648">
    <property type="entry name" value="a domain/subunit of cytochrome bc1 complex (Ubiquinol-cytochrome c reductase)"/>
    <property type="match status" value="1"/>
</dbReference>
<dbReference type="SUPFAM" id="SSF81342">
    <property type="entry name" value="Transmembrane di-heme cytochromes"/>
    <property type="match status" value="1"/>
</dbReference>
<dbReference type="PROSITE" id="PS51003">
    <property type="entry name" value="CYTB_CTER"/>
    <property type="match status" value="1"/>
</dbReference>
<dbReference type="PROSITE" id="PS51002">
    <property type="entry name" value="CYTB_NTER"/>
    <property type="match status" value="1"/>
</dbReference>
<proteinExistence type="inferred from homology"/>
<geneLocation type="mitochondrion"/>
<protein>
    <recommendedName>
        <fullName>Cytochrome b</fullName>
    </recommendedName>
    <alternativeName>
        <fullName>Complex III subunit 3</fullName>
    </alternativeName>
    <alternativeName>
        <fullName>Complex III subunit III</fullName>
    </alternativeName>
    <alternativeName>
        <fullName>Cytochrome b-c1 complex subunit 3</fullName>
    </alternativeName>
    <alternativeName>
        <fullName>Ubiquinol-cytochrome-c reductase complex cytochrome b subunit</fullName>
    </alternativeName>
</protein>
<name>CYB_SINKE</name>
<organism>
    <name type="scientific">Sinomicrurus kelloggi</name>
    <name type="common">Kellogg's coral snake</name>
    <name type="synonym">Calliophis kelloggi</name>
    <dbReference type="NCBI Taxonomy" id="114670"/>
    <lineage>
        <taxon>Eukaryota</taxon>
        <taxon>Metazoa</taxon>
        <taxon>Chordata</taxon>
        <taxon>Craniata</taxon>
        <taxon>Vertebrata</taxon>
        <taxon>Euteleostomi</taxon>
        <taxon>Lepidosauria</taxon>
        <taxon>Squamata</taxon>
        <taxon>Bifurcata</taxon>
        <taxon>Unidentata</taxon>
        <taxon>Episquamata</taxon>
        <taxon>Toxicofera</taxon>
        <taxon>Serpentes</taxon>
        <taxon>Colubroidea</taxon>
        <taxon>Elapidae</taxon>
        <taxon>Elapinae</taxon>
        <taxon>Sinomicrurus</taxon>
    </lineage>
</organism>
<reference key="1">
    <citation type="submission" date="1999-12" db="EMBL/GenBank/DDBJ databases">
        <title>The phylogenetic relationships of Asian coral snakes (Elapidae: Calliophis and Maticora) based on morphological and molecular characters.</title>
        <authorList>
            <person name="Slowinski J.B."/>
            <person name="Boundy J."/>
            <person name="Lawson R."/>
        </authorList>
    </citation>
    <scope>NUCLEOTIDE SEQUENCE [GENOMIC DNA]</scope>
</reference>
<gene>
    <name type="primary">MT-CYB</name>
    <name type="synonym">COB</name>
    <name type="synonym">CYTB</name>
    <name type="synonym">MTCYB</name>
</gene>
<accession>Q9MLD7</accession>
<sequence>MSNQHTLLISNLLPVGSNISTWWNFGSMLLTCLILQITTGFFLAIHYTANINLAFSSVTHIMRDVPYGWIMQNLHAIGASMFFICIYIHIARGLYYGLYMNKNVWLSGTTLLITLMATAFFGYVLPWGQMSFWAATVITNLLTAIPYLGTTITTWLWGGFSINDPTLTRFFALHFILPFAIISLSSIHIILLHNKGSNNPLGTNSDIDKIPFHPYHSYKDTLMTISLFILMFTILSFSPDLFNDPENFSKANPLVTPQHIKPEWYFLFAYGILRSIPNKLGGTLALLMSVTILMTAPFTHTSHMRPMTFRPLAQMAFWTLIATFITITWTASKPVEPPFIIISQMTSILYFLFFIMNPLLGWTENKIMMNN</sequence>
<keyword id="KW-0249">Electron transport</keyword>
<keyword id="KW-0349">Heme</keyword>
<keyword id="KW-0408">Iron</keyword>
<keyword id="KW-0472">Membrane</keyword>
<keyword id="KW-0479">Metal-binding</keyword>
<keyword id="KW-0496">Mitochondrion</keyword>
<keyword id="KW-0999">Mitochondrion inner membrane</keyword>
<keyword id="KW-0679">Respiratory chain</keyword>
<keyword id="KW-0812">Transmembrane</keyword>
<keyword id="KW-1133">Transmembrane helix</keyword>
<keyword id="KW-0813">Transport</keyword>
<keyword id="KW-0830">Ubiquinone</keyword>
<feature type="chain" id="PRO_0000060708" description="Cytochrome b">
    <location>
        <begin position="1"/>
        <end position="371"/>
    </location>
</feature>
<feature type="transmembrane region" description="Helical" evidence="2">
    <location>
        <begin position="25"/>
        <end position="45"/>
    </location>
</feature>
<feature type="transmembrane region" description="Helical" evidence="2">
    <location>
        <begin position="69"/>
        <end position="90"/>
    </location>
</feature>
<feature type="transmembrane region" description="Helical" evidence="2">
    <location>
        <begin position="105"/>
        <end position="125"/>
    </location>
</feature>
<feature type="transmembrane region" description="Helical" evidence="2">
    <location>
        <begin position="170"/>
        <end position="190"/>
    </location>
</feature>
<feature type="transmembrane region" description="Helical" evidence="2">
    <location>
        <begin position="218"/>
        <end position="238"/>
    </location>
</feature>
<feature type="transmembrane region" description="Helical" evidence="2">
    <location>
        <begin position="280"/>
        <end position="300"/>
    </location>
</feature>
<feature type="transmembrane region" description="Helical" evidence="2">
    <location>
        <begin position="312"/>
        <end position="332"/>
    </location>
</feature>
<feature type="transmembrane region" description="Helical" evidence="2">
    <location>
        <begin position="339"/>
        <end position="358"/>
    </location>
</feature>
<feature type="binding site" description="axial binding residue" evidence="2">
    <location>
        <position position="75"/>
    </location>
    <ligand>
        <name>heme b</name>
        <dbReference type="ChEBI" id="CHEBI:60344"/>
        <label>b562</label>
    </ligand>
    <ligandPart>
        <name>Fe</name>
        <dbReference type="ChEBI" id="CHEBI:18248"/>
    </ligandPart>
</feature>
<feature type="binding site" description="axial binding residue" evidence="2">
    <location>
        <position position="89"/>
    </location>
    <ligand>
        <name>heme b</name>
        <dbReference type="ChEBI" id="CHEBI:60344"/>
        <label>b566</label>
    </ligand>
    <ligandPart>
        <name>Fe</name>
        <dbReference type="ChEBI" id="CHEBI:18248"/>
    </ligandPart>
</feature>
<feature type="binding site" description="axial binding residue" evidence="2">
    <location>
        <position position="174"/>
    </location>
    <ligand>
        <name>heme b</name>
        <dbReference type="ChEBI" id="CHEBI:60344"/>
        <label>b562</label>
    </ligand>
    <ligandPart>
        <name>Fe</name>
        <dbReference type="ChEBI" id="CHEBI:18248"/>
    </ligandPart>
</feature>
<feature type="binding site" description="axial binding residue" evidence="2">
    <location>
        <position position="188"/>
    </location>
    <ligand>
        <name>heme b</name>
        <dbReference type="ChEBI" id="CHEBI:60344"/>
        <label>b566</label>
    </ligand>
    <ligandPart>
        <name>Fe</name>
        <dbReference type="ChEBI" id="CHEBI:18248"/>
    </ligandPart>
</feature>
<feature type="binding site" evidence="2">
    <location>
        <position position="193"/>
    </location>
    <ligand>
        <name>a ubiquinone</name>
        <dbReference type="ChEBI" id="CHEBI:16389"/>
    </ligand>
</feature>